<organism>
    <name type="scientific">Dictyostelium discoideum</name>
    <name type="common">Social amoeba</name>
    <dbReference type="NCBI Taxonomy" id="44689"/>
    <lineage>
        <taxon>Eukaryota</taxon>
        <taxon>Amoebozoa</taxon>
        <taxon>Evosea</taxon>
        <taxon>Eumycetozoa</taxon>
        <taxon>Dictyostelia</taxon>
        <taxon>Dictyosteliales</taxon>
        <taxon>Dictyosteliaceae</taxon>
        <taxon>Dictyostelium</taxon>
    </lineage>
</organism>
<dbReference type="EC" id="1.14.-.-"/>
<dbReference type="EMBL" id="AAFI02000052">
    <property type="protein sequence ID" value="EAL65786.1"/>
    <property type="molecule type" value="Genomic_DNA"/>
</dbReference>
<dbReference type="RefSeq" id="XP_639143.1">
    <property type="nucleotide sequence ID" value="XM_634051.1"/>
</dbReference>
<dbReference type="SMR" id="Q54RA4"/>
<dbReference type="FunCoup" id="Q54RA4">
    <property type="interactions" value="2"/>
</dbReference>
<dbReference type="STRING" id="44689.Q54RA4"/>
<dbReference type="PaxDb" id="44689-DDB0185435"/>
<dbReference type="EnsemblProtists" id="EAL65786">
    <property type="protein sequence ID" value="EAL65786"/>
    <property type="gene ID" value="DDB_G0283291"/>
</dbReference>
<dbReference type="GeneID" id="8624013"/>
<dbReference type="KEGG" id="ddi:DDB_G0283291"/>
<dbReference type="dictyBase" id="DDB_G0283291"/>
<dbReference type="VEuPathDB" id="AmoebaDB:DDB_G0283291"/>
<dbReference type="eggNOG" id="KOG0143">
    <property type="taxonomic scope" value="Eukaryota"/>
</dbReference>
<dbReference type="HOGENOM" id="CLU_010119_6_3_1"/>
<dbReference type="InParanoid" id="Q54RA4"/>
<dbReference type="OMA" id="ARETGFF"/>
<dbReference type="PhylomeDB" id="Q54RA4"/>
<dbReference type="PRO" id="PR:Q54RA4"/>
<dbReference type="Proteomes" id="UP000002195">
    <property type="component" value="Chromosome 4"/>
</dbReference>
<dbReference type="GO" id="GO:0016706">
    <property type="term" value="F:2-oxoglutarate-dependent dioxygenase activity"/>
    <property type="evidence" value="ECO:0000318"/>
    <property type="project" value="GO_Central"/>
</dbReference>
<dbReference type="GO" id="GO:0046872">
    <property type="term" value="F:metal ion binding"/>
    <property type="evidence" value="ECO:0007669"/>
    <property type="project" value="UniProtKB-KW"/>
</dbReference>
<dbReference type="FunFam" id="2.60.120.330:FF:000049">
    <property type="entry name" value="Probable iron/ascorbate oxidoreductase"/>
    <property type="match status" value="1"/>
</dbReference>
<dbReference type="Gene3D" id="2.60.120.330">
    <property type="entry name" value="B-lactam Antibiotic, Isopenicillin N Synthase, Chain"/>
    <property type="match status" value="1"/>
</dbReference>
<dbReference type="InterPro" id="IPR026992">
    <property type="entry name" value="DIOX_N"/>
</dbReference>
<dbReference type="InterPro" id="IPR044861">
    <property type="entry name" value="IPNS-like_FE2OG_OXY"/>
</dbReference>
<dbReference type="InterPro" id="IPR027443">
    <property type="entry name" value="IPNS-like_sf"/>
</dbReference>
<dbReference type="InterPro" id="IPR050231">
    <property type="entry name" value="Iron_ascorbate_oxido_reductase"/>
</dbReference>
<dbReference type="InterPro" id="IPR005123">
    <property type="entry name" value="Oxoglu/Fe-dep_dioxygenase_dom"/>
</dbReference>
<dbReference type="PANTHER" id="PTHR47990">
    <property type="entry name" value="2-OXOGLUTARATE (2OG) AND FE(II)-DEPENDENT OXYGENASE SUPERFAMILY PROTEIN-RELATED"/>
    <property type="match status" value="1"/>
</dbReference>
<dbReference type="Pfam" id="PF03171">
    <property type="entry name" value="2OG-FeII_Oxy"/>
    <property type="match status" value="1"/>
</dbReference>
<dbReference type="Pfam" id="PF14226">
    <property type="entry name" value="DIOX_N"/>
    <property type="match status" value="1"/>
</dbReference>
<dbReference type="PRINTS" id="PR00682">
    <property type="entry name" value="IPNSYNTHASE"/>
</dbReference>
<dbReference type="SUPFAM" id="SSF51197">
    <property type="entry name" value="Clavaminate synthase-like"/>
    <property type="match status" value="1"/>
</dbReference>
<dbReference type="PROSITE" id="PS51471">
    <property type="entry name" value="FE2OG_OXY"/>
    <property type="match status" value="1"/>
</dbReference>
<gene>
    <name type="ORF">DDB_G0283291</name>
</gene>
<proteinExistence type="inferred from homology"/>
<protein>
    <recommendedName>
        <fullName>Probable iron/ascorbate oxidoreductase DDB_G0283291</fullName>
        <ecNumber>1.14.-.-</ecNumber>
    </recommendedName>
</protein>
<name>Y3291_DICDI</name>
<accession>Q54RA4</accession>
<reference key="1">
    <citation type="journal article" date="2005" name="Nature">
        <title>The genome of the social amoeba Dictyostelium discoideum.</title>
        <authorList>
            <person name="Eichinger L."/>
            <person name="Pachebat J.A."/>
            <person name="Gloeckner G."/>
            <person name="Rajandream M.A."/>
            <person name="Sucgang R."/>
            <person name="Berriman M."/>
            <person name="Song J."/>
            <person name="Olsen R."/>
            <person name="Szafranski K."/>
            <person name="Xu Q."/>
            <person name="Tunggal B."/>
            <person name="Kummerfeld S."/>
            <person name="Madera M."/>
            <person name="Konfortov B.A."/>
            <person name="Rivero F."/>
            <person name="Bankier A.T."/>
            <person name="Lehmann R."/>
            <person name="Hamlin N."/>
            <person name="Davies R."/>
            <person name="Gaudet P."/>
            <person name="Fey P."/>
            <person name="Pilcher K."/>
            <person name="Chen G."/>
            <person name="Saunders D."/>
            <person name="Sodergren E.J."/>
            <person name="Davis P."/>
            <person name="Kerhornou A."/>
            <person name="Nie X."/>
            <person name="Hall N."/>
            <person name="Anjard C."/>
            <person name="Hemphill L."/>
            <person name="Bason N."/>
            <person name="Farbrother P."/>
            <person name="Desany B."/>
            <person name="Just E."/>
            <person name="Morio T."/>
            <person name="Rost R."/>
            <person name="Churcher C.M."/>
            <person name="Cooper J."/>
            <person name="Haydock S."/>
            <person name="van Driessche N."/>
            <person name="Cronin A."/>
            <person name="Goodhead I."/>
            <person name="Muzny D.M."/>
            <person name="Mourier T."/>
            <person name="Pain A."/>
            <person name="Lu M."/>
            <person name="Harper D."/>
            <person name="Lindsay R."/>
            <person name="Hauser H."/>
            <person name="James K.D."/>
            <person name="Quiles M."/>
            <person name="Madan Babu M."/>
            <person name="Saito T."/>
            <person name="Buchrieser C."/>
            <person name="Wardroper A."/>
            <person name="Felder M."/>
            <person name="Thangavelu M."/>
            <person name="Johnson D."/>
            <person name="Knights A."/>
            <person name="Loulseged H."/>
            <person name="Mungall K.L."/>
            <person name="Oliver K."/>
            <person name="Price C."/>
            <person name="Quail M.A."/>
            <person name="Urushihara H."/>
            <person name="Hernandez J."/>
            <person name="Rabbinowitsch E."/>
            <person name="Steffen D."/>
            <person name="Sanders M."/>
            <person name="Ma J."/>
            <person name="Kohara Y."/>
            <person name="Sharp S."/>
            <person name="Simmonds M.N."/>
            <person name="Spiegler S."/>
            <person name="Tivey A."/>
            <person name="Sugano S."/>
            <person name="White B."/>
            <person name="Walker D."/>
            <person name="Woodward J.R."/>
            <person name="Winckler T."/>
            <person name="Tanaka Y."/>
            <person name="Shaulsky G."/>
            <person name="Schleicher M."/>
            <person name="Weinstock G.M."/>
            <person name="Rosenthal A."/>
            <person name="Cox E.C."/>
            <person name="Chisholm R.L."/>
            <person name="Gibbs R.A."/>
            <person name="Loomis W.F."/>
            <person name="Platzer M."/>
            <person name="Kay R.R."/>
            <person name="Williams J.G."/>
            <person name="Dear P.H."/>
            <person name="Noegel A.A."/>
            <person name="Barrell B.G."/>
            <person name="Kuspa A."/>
        </authorList>
    </citation>
    <scope>NUCLEOTIDE SEQUENCE [LARGE SCALE GENOMIC DNA]</scope>
    <source>
        <strain>AX4</strain>
    </source>
</reference>
<sequence length="363" mass="41517">MTSKIENITIEQLPIIDIESYGNDKEEELKKKLISKEIENACKNFGFFYIKGHGIDQELIDRLERLSKKFFSLDQSIKMKYRMELAQKAWRGYFVVGGELTSGLKDWKEGLYLGTELNDDHPLVIAQTPLHGLNLFPTLEEEIEYDIVGFKDTILTYIDKVTKLGHSLMELIAISLNLSADYFSSRYTKDPLILYRIFNYPSIISSGDDNKTTGESSDDNDKVEWGVGEHTDYGVLTILYQDDVGGLQVHSKNGWISAPPIKGTFVCNIGDMLDRMTGGLYRSTPHRVELNRSGRDRISFPLFFDPNFNSYPTEIEGIEQIENKDDSSSRWDHFNIHSFKGSYGQYLLNKIGKVFPDLKNNVL</sequence>
<keyword id="KW-0223">Dioxygenase</keyword>
<keyword id="KW-0408">Iron</keyword>
<keyword id="KW-0479">Metal-binding</keyword>
<keyword id="KW-0560">Oxidoreductase</keyword>
<keyword id="KW-1185">Reference proteome</keyword>
<evidence type="ECO:0000255" key="1">
    <source>
        <dbReference type="PROSITE-ProRule" id="PRU00805"/>
    </source>
</evidence>
<evidence type="ECO:0000305" key="2"/>
<feature type="chain" id="PRO_0000392077" description="Probable iron/ascorbate oxidoreductase DDB_G0283291">
    <location>
        <begin position="1"/>
        <end position="363"/>
    </location>
</feature>
<feature type="domain" description="Fe2OG dioxygenase" evidence="1">
    <location>
        <begin position="197"/>
        <end position="306"/>
    </location>
</feature>
<feature type="binding site" evidence="1">
    <location>
        <position position="230"/>
    </location>
    <ligand>
        <name>Fe cation</name>
        <dbReference type="ChEBI" id="CHEBI:24875"/>
    </ligand>
</feature>
<feature type="binding site" evidence="1">
    <location>
        <position position="232"/>
    </location>
    <ligand>
        <name>Fe cation</name>
        <dbReference type="ChEBI" id="CHEBI:24875"/>
    </ligand>
</feature>
<feature type="binding site" evidence="1">
    <location>
        <position position="286"/>
    </location>
    <ligand>
        <name>Fe cation</name>
        <dbReference type="ChEBI" id="CHEBI:24875"/>
    </ligand>
</feature>
<feature type="binding site" evidence="1">
    <location>
        <position position="297"/>
    </location>
    <ligand>
        <name>2-oxoglutarate</name>
        <dbReference type="ChEBI" id="CHEBI:16810"/>
    </ligand>
</feature>
<comment type="cofactor">
    <cofactor evidence="1">
        <name>Fe(2+)</name>
        <dbReference type="ChEBI" id="CHEBI:29033"/>
    </cofactor>
    <text evidence="1">Binds 1 Fe(2+) ion per subunit.</text>
</comment>
<comment type="similarity">
    <text evidence="2">Belongs to the iron/ascorbate-dependent oxidoreductase family.</text>
</comment>